<gene>
    <name evidence="1" type="primary">tmk</name>
    <name type="ordered locus">GOX0018</name>
</gene>
<accession>Q5FUU6</accession>
<proteinExistence type="inferred from homology"/>
<name>KTHY_GLUOX</name>
<dbReference type="EC" id="2.7.4.9" evidence="1"/>
<dbReference type="EMBL" id="CP000009">
    <property type="protein sequence ID" value="AAW59817.1"/>
    <property type="molecule type" value="Genomic_DNA"/>
</dbReference>
<dbReference type="RefSeq" id="WP_011251621.1">
    <property type="nucleotide sequence ID" value="NC_006677.1"/>
</dbReference>
<dbReference type="SMR" id="Q5FUU6"/>
<dbReference type="STRING" id="290633.GOX0018"/>
<dbReference type="KEGG" id="gox:GOX0018"/>
<dbReference type="eggNOG" id="COG0125">
    <property type="taxonomic scope" value="Bacteria"/>
</dbReference>
<dbReference type="HOGENOM" id="CLU_049131_0_2_5"/>
<dbReference type="Proteomes" id="UP000006375">
    <property type="component" value="Chromosome"/>
</dbReference>
<dbReference type="GO" id="GO:0005829">
    <property type="term" value="C:cytosol"/>
    <property type="evidence" value="ECO:0007669"/>
    <property type="project" value="TreeGrafter"/>
</dbReference>
<dbReference type="GO" id="GO:0005524">
    <property type="term" value="F:ATP binding"/>
    <property type="evidence" value="ECO:0007669"/>
    <property type="project" value="UniProtKB-UniRule"/>
</dbReference>
<dbReference type="GO" id="GO:0004798">
    <property type="term" value="F:dTMP kinase activity"/>
    <property type="evidence" value="ECO:0007669"/>
    <property type="project" value="UniProtKB-UniRule"/>
</dbReference>
<dbReference type="GO" id="GO:0006233">
    <property type="term" value="P:dTDP biosynthetic process"/>
    <property type="evidence" value="ECO:0007669"/>
    <property type="project" value="InterPro"/>
</dbReference>
<dbReference type="GO" id="GO:0006235">
    <property type="term" value="P:dTTP biosynthetic process"/>
    <property type="evidence" value="ECO:0007669"/>
    <property type="project" value="UniProtKB-UniRule"/>
</dbReference>
<dbReference type="GO" id="GO:0006227">
    <property type="term" value="P:dUDP biosynthetic process"/>
    <property type="evidence" value="ECO:0007669"/>
    <property type="project" value="TreeGrafter"/>
</dbReference>
<dbReference type="CDD" id="cd01672">
    <property type="entry name" value="TMPK"/>
    <property type="match status" value="1"/>
</dbReference>
<dbReference type="FunFam" id="3.40.50.300:FF:000225">
    <property type="entry name" value="Thymidylate kinase"/>
    <property type="match status" value="1"/>
</dbReference>
<dbReference type="Gene3D" id="3.40.50.300">
    <property type="entry name" value="P-loop containing nucleotide triphosphate hydrolases"/>
    <property type="match status" value="1"/>
</dbReference>
<dbReference type="HAMAP" id="MF_00165">
    <property type="entry name" value="Thymidylate_kinase"/>
    <property type="match status" value="1"/>
</dbReference>
<dbReference type="InterPro" id="IPR027417">
    <property type="entry name" value="P-loop_NTPase"/>
</dbReference>
<dbReference type="InterPro" id="IPR039430">
    <property type="entry name" value="Thymidylate_kin-like_dom"/>
</dbReference>
<dbReference type="InterPro" id="IPR018095">
    <property type="entry name" value="Thymidylate_kin_CS"/>
</dbReference>
<dbReference type="InterPro" id="IPR018094">
    <property type="entry name" value="Thymidylate_kinase"/>
</dbReference>
<dbReference type="NCBIfam" id="TIGR00041">
    <property type="entry name" value="DTMP_kinase"/>
    <property type="match status" value="1"/>
</dbReference>
<dbReference type="PANTHER" id="PTHR10344">
    <property type="entry name" value="THYMIDYLATE KINASE"/>
    <property type="match status" value="1"/>
</dbReference>
<dbReference type="PANTHER" id="PTHR10344:SF4">
    <property type="entry name" value="UMP-CMP KINASE 2, MITOCHONDRIAL"/>
    <property type="match status" value="1"/>
</dbReference>
<dbReference type="Pfam" id="PF02223">
    <property type="entry name" value="Thymidylate_kin"/>
    <property type="match status" value="1"/>
</dbReference>
<dbReference type="SUPFAM" id="SSF52540">
    <property type="entry name" value="P-loop containing nucleoside triphosphate hydrolases"/>
    <property type="match status" value="1"/>
</dbReference>
<dbReference type="PROSITE" id="PS01331">
    <property type="entry name" value="THYMIDYLATE_KINASE"/>
    <property type="match status" value="1"/>
</dbReference>
<keyword id="KW-0067">ATP-binding</keyword>
<keyword id="KW-0418">Kinase</keyword>
<keyword id="KW-0545">Nucleotide biosynthesis</keyword>
<keyword id="KW-0547">Nucleotide-binding</keyword>
<keyword id="KW-1185">Reference proteome</keyword>
<keyword id="KW-0808">Transferase</keyword>
<reference key="1">
    <citation type="journal article" date="2005" name="Nat. Biotechnol.">
        <title>Complete genome sequence of the acetic acid bacterium Gluconobacter oxydans.</title>
        <authorList>
            <person name="Prust C."/>
            <person name="Hoffmeister M."/>
            <person name="Liesegang H."/>
            <person name="Wiezer A."/>
            <person name="Fricke W.F."/>
            <person name="Ehrenreich A."/>
            <person name="Gottschalk G."/>
            <person name="Deppenmeier U."/>
        </authorList>
    </citation>
    <scope>NUCLEOTIDE SEQUENCE [LARGE SCALE GENOMIC DNA]</scope>
    <source>
        <strain>621H</strain>
    </source>
</reference>
<sequence length="214" mass="22970">MAGKGLFITLEGGEGAGKSTQARLLAEALRAEGHKVLLTREPGGTPGAEEIRNLLLFGKVDLSWRAEILMHMAARSDHLDNAILPALERGEIVVCDRFHDSTLAYQGYGIGQGAPEVLAFLNGARKLVDFEPDLTLMLELPRPQALARLKARGGQTDRYEAQAEAFHERVLAGFDAIASADPVRVKRVDAGQTPEAVSAALLQAVHESLTVQGV</sequence>
<organism>
    <name type="scientific">Gluconobacter oxydans (strain 621H)</name>
    <name type="common">Gluconobacter suboxydans</name>
    <dbReference type="NCBI Taxonomy" id="290633"/>
    <lineage>
        <taxon>Bacteria</taxon>
        <taxon>Pseudomonadati</taxon>
        <taxon>Pseudomonadota</taxon>
        <taxon>Alphaproteobacteria</taxon>
        <taxon>Acetobacterales</taxon>
        <taxon>Acetobacteraceae</taxon>
        <taxon>Gluconobacter</taxon>
    </lineage>
</organism>
<feature type="chain" id="PRO_1000123575" description="Thymidylate kinase">
    <location>
        <begin position="1"/>
        <end position="214"/>
    </location>
</feature>
<feature type="binding site" evidence="1">
    <location>
        <begin position="12"/>
        <end position="19"/>
    </location>
    <ligand>
        <name>ATP</name>
        <dbReference type="ChEBI" id="CHEBI:30616"/>
    </ligand>
</feature>
<evidence type="ECO:0000255" key="1">
    <source>
        <dbReference type="HAMAP-Rule" id="MF_00165"/>
    </source>
</evidence>
<protein>
    <recommendedName>
        <fullName evidence="1">Thymidylate kinase</fullName>
        <ecNumber evidence="1">2.7.4.9</ecNumber>
    </recommendedName>
    <alternativeName>
        <fullName evidence="1">dTMP kinase</fullName>
    </alternativeName>
</protein>
<comment type="function">
    <text evidence="1">Phosphorylation of dTMP to form dTDP in both de novo and salvage pathways of dTTP synthesis.</text>
</comment>
<comment type="catalytic activity">
    <reaction evidence="1">
        <text>dTMP + ATP = dTDP + ADP</text>
        <dbReference type="Rhea" id="RHEA:13517"/>
        <dbReference type="ChEBI" id="CHEBI:30616"/>
        <dbReference type="ChEBI" id="CHEBI:58369"/>
        <dbReference type="ChEBI" id="CHEBI:63528"/>
        <dbReference type="ChEBI" id="CHEBI:456216"/>
        <dbReference type="EC" id="2.7.4.9"/>
    </reaction>
</comment>
<comment type="similarity">
    <text evidence="1">Belongs to the thymidylate kinase family.</text>
</comment>